<accession>Q9MUV7</accession>
<organism>
    <name type="scientific">Mesostigma viride</name>
    <name type="common">Green alga</name>
    <dbReference type="NCBI Taxonomy" id="41882"/>
    <lineage>
        <taxon>Eukaryota</taxon>
        <taxon>Viridiplantae</taxon>
        <taxon>Streptophyta</taxon>
        <taxon>Mesostigmatophyceae</taxon>
        <taxon>Mesostigmatales</taxon>
        <taxon>Mesostigmataceae</taxon>
        <taxon>Mesostigma</taxon>
    </lineage>
</organism>
<dbReference type="EMBL" id="AF166114">
    <property type="protein sequence ID" value="AAF43794.1"/>
    <property type="molecule type" value="Genomic_DNA"/>
</dbReference>
<dbReference type="RefSeq" id="NP_038353.1">
    <property type="nucleotide sequence ID" value="NC_002186.1"/>
</dbReference>
<dbReference type="SMR" id="Q9MUV7"/>
<dbReference type="GeneID" id="800937"/>
<dbReference type="GO" id="GO:0009535">
    <property type="term" value="C:chloroplast thylakoid membrane"/>
    <property type="evidence" value="ECO:0007669"/>
    <property type="project" value="UniProtKB-SubCell"/>
</dbReference>
<dbReference type="GO" id="GO:0009523">
    <property type="term" value="C:photosystem II"/>
    <property type="evidence" value="ECO:0007669"/>
    <property type="project" value="UniProtKB-KW"/>
</dbReference>
<dbReference type="GO" id="GO:0016168">
    <property type="term" value="F:chlorophyll binding"/>
    <property type="evidence" value="ECO:0007669"/>
    <property type="project" value="UniProtKB-UniRule"/>
</dbReference>
<dbReference type="GO" id="GO:0045156">
    <property type="term" value="F:electron transporter, transferring electrons within the cyclic electron transport pathway of photosynthesis activity"/>
    <property type="evidence" value="ECO:0007669"/>
    <property type="project" value="InterPro"/>
</dbReference>
<dbReference type="GO" id="GO:0009772">
    <property type="term" value="P:photosynthetic electron transport in photosystem II"/>
    <property type="evidence" value="ECO:0007669"/>
    <property type="project" value="InterPro"/>
</dbReference>
<dbReference type="FunFam" id="3.10.680.10:FF:000001">
    <property type="entry name" value="Photosystem II CP47 reaction center protein"/>
    <property type="match status" value="1"/>
</dbReference>
<dbReference type="Gene3D" id="3.10.680.10">
    <property type="entry name" value="Photosystem II CP47 reaction center protein"/>
    <property type="match status" value="1"/>
</dbReference>
<dbReference type="HAMAP" id="MF_01495">
    <property type="entry name" value="PSII_PsbB_CP47"/>
    <property type="match status" value="1"/>
</dbReference>
<dbReference type="InterPro" id="IPR000932">
    <property type="entry name" value="PS_antenna-like"/>
</dbReference>
<dbReference type="InterPro" id="IPR036001">
    <property type="entry name" value="PS_II_antenna-like_sf"/>
</dbReference>
<dbReference type="InterPro" id="IPR017486">
    <property type="entry name" value="PSII_PsbB"/>
</dbReference>
<dbReference type="NCBIfam" id="TIGR03039">
    <property type="entry name" value="PS_II_CP47"/>
    <property type="match status" value="1"/>
</dbReference>
<dbReference type="Pfam" id="PF00421">
    <property type="entry name" value="PSII"/>
    <property type="match status" value="1"/>
</dbReference>
<dbReference type="SUPFAM" id="SSF161077">
    <property type="entry name" value="Photosystem II antenna protein-like"/>
    <property type="match status" value="1"/>
</dbReference>
<name>PSBB_MESVI</name>
<reference key="1">
    <citation type="journal article" date="2000" name="Nature">
        <title>Ancestral chloroplast genome in Mesostigma viride reveals an early branch of green plant evolution.</title>
        <authorList>
            <person name="Lemieux C."/>
            <person name="Otis C."/>
            <person name="Turmel M."/>
        </authorList>
    </citation>
    <scope>NUCLEOTIDE SEQUENCE [LARGE SCALE GENOMIC DNA]</scope>
    <source>
        <strain>NIES-296 / KY-14 / CCMP 2046</strain>
    </source>
</reference>
<keyword id="KW-0148">Chlorophyll</keyword>
<keyword id="KW-0150">Chloroplast</keyword>
<keyword id="KW-0157">Chromophore</keyword>
<keyword id="KW-0472">Membrane</keyword>
<keyword id="KW-0602">Photosynthesis</keyword>
<keyword id="KW-0604">Photosystem II</keyword>
<keyword id="KW-0934">Plastid</keyword>
<keyword id="KW-0793">Thylakoid</keyword>
<keyword id="KW-0812">Transmembrane</keyword>
<keyword id="KW-1133">Transmembrane helix</keyword>
<proteinExistence type="inferred from homology"/>
<evidence type="ECO:0000255" key="1">
    <source>
        <dbReference type="HAMAP-Rule" id="MF_01495"/>
    </source>
</evidence>
<feature type="chain" id="PRO_0000077487" description="Photosystem II CP47 reaction center protein">
    <location>
        <begin position="1"/>
        <end position="508"/>
    </location>
</feature>
<feature type="transmembrane region" description="Helical" evidence="1">
    <location>
        <begin position="21"/>
        <end position="36"/>
    </location>
</feature>
<feature type="transmembrane region" description="Helical" evidence="1">
    <location>
        <begin position="101"/>
        <end position="115"/>
    </location>
</feature>
<feature type="transmembrane region" description="Helical" evidence="1">
    <location>
        <begin position="140"/>
        <end position="156"/>
    </location>
</feature>
<feature type="transmembrane region" description="Helical" evidence="1">
    <location>
        <begin position="203"/>
        <end position="218"/>
    </location>
</feature>
<feature type="transmembrane region" description="Helical" evidence="1">
    <location>
        <begin position="237"/>
        <end position="252"/>
    </location>
</feature>
<feature type="transmembrane region" description="Helical" evidence="1">
    <location>
        <begin position="457"/>
        <end position="472"/>
    </location>
</feature>
<geneLocation type="chloroplast"/>
<sequence>MGLPWYRVHTVVLNDPGRLISVHIMHTGLVSGWAGSMAFYELAVFDPSDPVLNPMWRQGMFVLPFMTRLGISKSWGGWDINGDSITDPGLWSYEGVAATHIILAGLMFLASMWHWVYWDLELFRDPRTGKPALDLPKIFGIHLFLSGLLCFGFGAFHVTGLFGPGIWVSDPYGITGRVQPIEPSWGADGFDPFNPGGIASHHIAAGILGILAGLFHLSVRPSFRLYKALRMGNVETVLSSSIAAVFWAAFVVSGTMWYGSAATPIELFGPTRYQWDLGYFNKEINKRVQASIASGSTASEAWSRIPEKLAFYDYIGNNPAKGGLFRAGAMNNGDGIAAGWLGHAVFKDKEGRELFVRRMPTFFETFPVVLLDKDGIVRADIPFRRAESKYSIEQVGVSVAFYGGELDGVTFKDPTTVKKYARRAQLGEIFEFDRARLKSDGVFRSSPRGWFTFGHLCFALLFFFGHIWHGARTIFRDVFAGIDPDLDEQVEFGAFQKLGDASTRKQAV</sequence>
<gene>
    <name evidence="1" type="primary">psbB</name>
</gene>
<protein>
    <recommendedName>
        <fullName evidence="1">Photosystem II CP47 reaction center protein</fullName>
    </recommendedName>
    <alternativeName>
        <fullName evidence="1">PSII 47 kDa protein</fullName>
    </alternativeName>
    <alternativeName>
        <fullName evidence="1">Protein CP-47</fullName>
    </alternativeName>
</protein>
<comment type="function">
    <text evidence="1">One of the components of the core complex of photosystem II (PSII). It binds chlorophyll and helps catalyze the primary light-induced photochemical processes of PSII. PSII is a light-driven water:plastoquinone oxidoreductase, using light energy to abstract electrons from H(2)O, generating O(2) and a proton gradient subsequently used for ATP formation.</text>
</comment>
<comment type="cofactor">
    <text evidence="1">Binds multiple chlorophylls. PSII binds additional chlorophylls, carotenoids and specific lipids.</text>
</comment>
<comment type="subunit">
    <text evidence="1">PSII is composed of 1 copy each of membrane proteins PsbA, PsbB, PsbC, PsbD, PsbE, PsbF, PsbH, PsbI, PsbJ, PsbK, PsbL, PsbM, PsbT, PsbX, PsbY, PsbZ, Psb30/Ycf12, at least 3 peripheral proteins of the oxygen-evolving complex and a large number of cofactors. It forms dimeric complexes.</text>
</comment>
<comment type="subcellular location">
    <subcellularLocation>
        <location evidence="1">Plastid</location>
        <location evidence="1">Chloroplast thylakoid membrane</location>
        <topology evidence="1">Multi-pass membrane protein</topology>
    </subcellularLocation>
</comment>
<comment type="similarity">
    <text evidence="1">Belongs to the PsbB/PsbC family. PsbB subfamily.</text>
</comment>